<organism>
    <name type="scientific">Methylorubrum extorquens (strain PA1)</name>
    <name type="common">Methylobacterium extorquens</name>
    <dbReference type="NCBI Taxonomy" id="419610"/>
    <lineage>
        <taxon>Bacteria</taxon>
        <taxon>Pseudomonadati</taxon>
        <taxon>Pseudomonadota</taxon>
        <taxon>Alphaproteobacteria</taxon>
        <taxon>Hyphomicrobiales</taxon>
        <taxon>Methylobacteriaceae</taxon>
        <taxon>Methylorubrum</taxon>
    </lineage>
</organism>
<keyword id="KW-0694">RNA-binding</keyword>
<keyword id="KW-0346">Stress response</keyword>
<dbReference type="EMBL" id="CP000908">
    <property type="protein sequence ID" value="ABY31214.1"/>
    <property type="molecule type" value="Genomic_DNA"/>
</dbReference>
<dbReference type="RefSeq" id="WP_003600267.1">
    <property type="nucleotide sequence ID" value="NC_010172.1"/>
</dbReference>
<dbReference type="SMR" id="A9W6K8"/>
<dbReference type="GeneID" id="72990472"/>
<dbReference type="KEGG" id="mex:Mext_2824"/>
<dbReference type="eggNOG" id="COG1923">
    <property type="taxonomic scope" value="Bacteria"/>
</dbReference>
<dbReference type="HOGENOM" id="CLU_113688_0_0_5"/>
<dbReference type="BioCyc" id="MEXT419610:MEXT_RS14235-MONOMER"/>
<dbReference type="GO" id="GO:0005829">
    <property type="term" value="C:cytosol"/>
    <property type="evidence" value="ECO:0007669"/>
    <property type="project" value="TreeGrafter"/>
</dbReference>
<dbReference type="GO" id="GO:0003723">
    <property type="term" value="F:RNA binding"/>
    <property type="evidence" value="ECO:0007669"/>
    <property type="project" value="UniProtKB-UniRule"/>
</dbReference>
<dbReference type="GO" id="GO:0006355">
    <property type="term" value="P:regulation of DNA-templated transcription"/>
    <property type="evidence" value="ECO:0007669"/>
    <property type="project" value="InterPro"/>
</dbReference>
<dbReference type="GO" id="GO:0043487">
    <property type="term" value="P:regulation of RNA stability"/>
    <property type="evidence" value="ECO:0007669"/>
    <property type="project" value="TreeGrafter"/>
</dbReference>
<dbReference type="GO" id="GO:0045974">
    <property type="term" value="P:regulation of translation, ncRNA-mediated"/>
    <property type="evidence" value="ECO:0007669"/>
    <property type="project" value="TreeGrafter"/>
</dbReference>
<dbReference type="CDD" id="cd01716">
    <property type="entry name" value="Hfq"/>
    <property type="match status" value="1"/>
</dbReference>
<dbReference type="FunFam" id="2.30.30.100:FF:000001">
    <property type="entry name" value="RNA-binding protein Hfq"/>
    <property type="match status" value="1"/>
</dbReference>
<dbReference type="Gene3D" id="2.30.30.100">
    <property type="match status" value="1"/>
</dbReference>
<dbReference type="HAMAP" id="MF_00436">
    <property type="entry name" value="Hfq"/>
    <property type="match status" value="1"/>
</dbReference>
<dbReference type="InterPro" id="IPR005001">
    <property type="entry name" value="Hfq"/>
</dbReference>
<dbReference type="InterPro" id="IPR010920">
    <property type="entry name" value="LSM_dom_sf"/>
</dbReference>
<dbReference type="InterPro" id="IPR047575">
    <property type="entry name" value="Sm"/>
</dbReference>
<dbReference type="NCBIfam" id="TIGR02383">
    <property type="entry name" value="Hfq"/>
    <property type="match status" value="1"/>
</dbReference>
<dbReference type="NCBIfam" id="NF001602">
    <property type="entry name" value="PRK00395.1"/>
    <property type="match status" value="1"/>
</dbReference>
<dbReference type="PANTHER" id="PTHR34772">
    <property type="entry name" value="RNA-BINDING PROTEIN HFQ"/>
    <property type="match status" value="1"/>
</dbReference>
<dbReference type="PANTHER" id="PTHR34772:SF1">
    <property type="entry name" value="RNA-BINDING PROTEIN HFQ"/>
    <property type="match status" value="1"/>
</dbReference>
<dbReference type="Pfam" id="PF17209">
    <property type="entry name" value="Hfq"/>
    <property type="match status" value="1"/>
</dbReference>
<dbReference type="SUPFAM" id="SSF50182">
    <property type="entry name" value="Sm-like ribonucleoproteins"/>
    <property type="match status" value="1"/>
</dbReference>
<dbReference type="PROSITE" id="PS52002">
    <property type="entry name" value="SM"/>
    <property type="match status" value="1"/>
</dbReference>
<sequence length="84" mass="9541">MAGERAQNLQDTFLNHVRKNKIPLTIFLVNGVKLQGVVTWFDNFCVLLRRDGHSQLVYKHAISTIMPGHPVQLFEPDETAPEKA</sequence>
<feature type="chain" id="PRO_1000190338" description="RNA-binding protein Hfq">
    <location>
        <begin position="1"/>
        <end position="84"/>
    </location>
</feature>
<feature type="domain" description="Sm" evidence="2">
    <location>
        <begin position="11"/>
        <end position="71"/>
    </location>
</feature>
<name>HFQ_METEP</name>
<accession>A9W6K8</accession>
<proteinExistence type="inferred from homology"/>
<gene>
    <name evidence="1" type="primary">hfq</name>
    <name type="ordered locus">Mext_2824</name>
</gene>
<protein>
    <recommendedName>
        <fullName evidence="1">RNA-binding protein Hfq</fullName>
    </recommendedName>
</protein>
<reference key="1">
    <citation type="submission" date="2007-12" db="EMBL/GenBank/DDBJ databases">
        <title>Complete sequence of Methylobacterium extorquens PA1.</title>
        <authorList>
            <consortium name="US DOE Joint Genome Institute"/>
            <person name="Copeland A."/>
            <person name="Lucas S."/>
            <person name="Lapidus A."/>
            <person name="Barry K."/>
            <person name="Glavina del Rio T."/>
            <person name="Dalin E."/>
            <person name="Tice H."/>
            <person name="Pitluck S."/>
            <person name="Saunders E."/>
            <person name="Brettin T."/>
            <person name="Bruce D."/>
            <person name="Detter J.C."/>
            <person name="Han C."/>
            <person name="Schmutz J."/>
            <person name="Larimer F."/>
            <person name="Land M."/>
            <person name="Hauser L."/>
            <person name="Kyrpides N."/>
            <person name="Kim E."/>
            <person name="Marx C."/>
            <person name="Richardson P."/>
        </authorList>
    </citation>
    <scope>NUCLEOTIDE SEQUENCE [LARGE SCALE GENOMIC DNA]</scope>
    <source>
        <strain>PA1</strain>
    </source>
</reference>
<evidence type="ECO:0000255" key="1">
    <source>
        <dbReference type="HAMAP-Rule" id="MF_00436"/>
    </source>
</evidence>
<evidence type="ECO:0000255" key="2">
    <source>
        <dbReference type="PROSITE-ProRule" id="PRU01346"/>
    </source>
</evidence>
<comment type="function">
    <text evidence="1">RNA chaperone that binds small regulatory RNA (sRNAs) and mRNAs to facilitate mRNA translational regulation in response to envelope stress, environmental stress and changes in metabolite concentrations. Also binds with high specificity to tRNAs.</text>
</comment>
<comment type="subunit">
    <text evidence="1">Homohexamer.</text>
</comment>
<comment type="similarity">
    <text evidence="1">Belongs to the Hfq family.</text>
</comment>